<evidence type="ECO:0000250" key="1"/>
<evidence type="ECO:0000255" key="2"/>
<evidence type="ECO:0000305" key="3"/>
<dbReference type="EMBL" id="U64949">
    <property type="protein sequence ID" value="AAB39213.1"/>
    <property type="molecule type" value="Genomic_DNA"/>
</dbReference>
<dbReference type="EMBL" id="U59510">
    <property type="protein sequence ID" value="AAB39213.1"/>
    <property type="status" value="JOINED"/>
    <property type="molecule type" value="Genomic_DNA"/>
</dbReference>
<dbReference type="EMBL" id="U64946">
    <property type="protein sequence ID" value="AAB39213.1"/>
    <property type="status" value="JOINED"/>
    <property type="molecule type" value="Genomic_DNA"/>
</dbReference>
<dbReference type="EMBL" id="U64947">
    <property type="protein sequence ID" value="AAB39213.1"/>
    <property type="status" value="JOINED"/>
    <property type="molecule type" value="Genomic_DNA"/>
</dbReference>
<dbReference type="EMBL" id="U64948">
    <property type="protein sequence ID" value="AAB39213.1"/>
    <property type="status" value="JOINED"/>
    <property type="molecule type" value="Genomic_DNA"/>
</dbReference>
<dbReference type="EMBL" id="M65200">
    <property type="protein sequence ID" value="AAA42338.1"/>
    <property type="molecule type" value="Genomic_DNA"/>
</dbReference>
<dbReference type="PIR" id="B39070">
    <property type="entry name" value="B39070"/>
</dbReference>
<dbReference type="FunCoup" id="P23943">
    <property type="interactions" value="36"/>
</dbReference>
<dbReference type="STRING" id="10116.ENSRNOP00000012569"/>
<dbReference type="PhosphoSitePlus" id="P23943"/>
<dbReference type="PaxDb" id="10116-ENSRNOP00000012569"/>
<dbReference type="UCSC" id="RGD:2533">
    <property type="organism name" value="rat"/>
</dbReference>
<dbReference type="AGR" id="RGD:2533"/>
<dbReference type="RGD" id="2533">
    <property type="gene designation" value="Edn2"/>
</dbReference>
<dbReference type="eggNOG" id="ENOG502S5KM">
    <property type="taxonomic scope" value="Eukaryota"/>
</dbReference>
<dbReference type="InParanoid" id="P23943"/>
<dbReference type="PhylomeDB" id="P23943"/>
<dbReference type="Reactome" id="R-RNO-375276">
    <property type="pathway name" value="Peptide ligand-binding receptors"/>
</dbReference>
<dbReference type="Reactome" id="R-RNO-416476">
    <property type="pathway name" value="G alpha (q) signalling events"/>
</dbReference>
<dbReference type="PRO" id="PR:P23943"/>
<dbReference type="Proteomes" id="UP000002494">
    <property type="component" value="Unplaced"/>
</dbReference>
<dbReference type="GO" id="GO:0005615">
    <property type="term" value="C:extracellular space"/>
    <property type="evidence" value="ECO:0000314"/>
    <property type="project" value="RGD"/>
</dbReference>
<dbReference type="GO" id="GO:0031708">
    <property type="term" value="F:endothelin B receptor binding"/>
    <property type="evidence" value="ECO:0000266"/>
    <property type="project" value="RGD"/>
</dbReference>
<dbReference type="GO" id="GO:0005179">
    <property type="term" value="F:hormone activity"/>
    <property type="evidence" value="ECO:0000266"/>
    <property type="project" value="RGD"/>
</dbReference>
<dbReference type="GO" id="GO:0001525">
    <property type="term" value="P:angiogenesis"/>
    <property type="evidence" value="ECO:0000266"/>
    <property type="project" value="RGD"/>
</dbReference>
<dbReference type="GO" id="GO:0014824">
    <property type="term" value="P:artery smooth muscle contraction"/>
    <property type="evidence" value="ECO:0000266"/>
    <property type="project" value="RGD"/>
</dbReference>
<dbReference type="GO" id="GO:0048675">
    <property type="term" value="P:axon extension"/>
    <property type="evidence" value="ECO:0000266"/>
    <property type="project" value="RGD"/>
</dbReference>
<dbReference type="GO" id="GO:0009932">
    <property type="term" value="P:cell tip growth"/>
    <property type="evidence" value="ECO:0000266"/>
    <property type="project" value="RGD"/>
</dbReference>
<dbReference type="GO" id="GO:0019221">
    <property type="term" value="P:cytokine-mediated signaling pathway"/>
    <property type="evidence" value="ECO:0000266"/>
    <property type="project" value="RGD"/>
</dbReference>
<dbReference type="GO" id="GO:0043542">
    <property type="term" value="P:endothelial cell migration"/>
    <property type="evidence" value="ECO:0000266"/>
    <property type="project" value="RGD"/>
</dbReference>
<dbReference type="GO" id="GO:0097009">
    <property type="term" value="P:energy homeostasis"/>
    <property type="evidence" value="ECO:0000266"/>
    <property type="project" value="RGD"/>
</dbReference>
<dbReference type="GO" id="GO:0006874">
    <property type="term" value="P:intracellular calcium ion homeostasis"/>
    <property type="evidence" value="ECO:0000318"/>
    <property type="project" value="GO_Central"/>
</dbReference>
<dbReference type="GO" id="GO:0048286">
    <property type="term" value="P:lung alveolus development"/>
    <property type="evidence" value="ECO:0000266"/>
    <property type="project" value="RGD"/>
</dbReference>
<dbReference type="GO" id="GO:0042116">
    <property type="term" value="P:macrophage activation"/>
    <property type="evidence" value="ECO:0000266"/>
    <property type="project" value="RGD"/>
</dbReference>
<dbReference type="GO" id="GO:0048246">
    <property type="term" value="P:macrophage chemotaxis"/>
    <property type="evidence" value="ECO:0000266"/>
    <property type="project" value="RGD"/>
</dbReference>
<dbReference type="GO" id="GO:0046888">
    <property type="term" value="P:negative regulation of hormone secretion"/>
    <property type="evidence" value="ECO:0000314"/>
    <property type="project" value="RGD"/>
</dbReference>
<dbReference type="GO" id="GO:0031175">
    <property type="term" value="P:neuron projection development"/>
    <property type="evidence" value="ECO:0000266"/>
    <property type="project" value="RGD"/>
</dbReference>
<dbReference type="GO" id="GO:0030593">
    <property type="term" value="P:neutrophil chemotaxis"/>
    <property type="evidence" value="ECO:0000266"/>
    <property type="project" value="RGD"/>
</dbReference>
<dbReference type="GO" id="GO:0001543">
    <property type="term" value="P:ovarian follicle rupture"/>
    <property type="evidence" value="ECO:0000314"/>
    <property type="project" value="RGD"/>
</dbReference>
<dbReference type="GO" id="GO:0007200">
    <property type="term" value="P:phospholipase C-activating G protein-coupled receptor signaling pathway"/>
    <property type="evidence" value="ECO:0000315"/>
    <property type="project" value="RGD"/>
</dbReference>
<dbReference type="GO" id="GO:0050850">
    <property type="term" value="P:positive regulation of calcium-mediated signaling"/>
    <property type="evidence" value="ECO:0000266"/>
    <property type="project" value="RGD"/>
</dbReference>
<dbReference type="GO" id="GO:0008284">
    <property type="term" value="P:positive regulation of cell population proliferation"/>
    <property type="evidence" value="ECO:0000266"/>
    <property type="project" value="RGD"/>
</dbReference>
<dbReference type="GO" id="GO:0010460">
    <property type="term" value="P:positive regulation of heart rate"/>
    <property type="evidence" value="ECO:0000266"/>
    <property type="project" value="RGD"/>
</dbReference>
<dbReference type="GO" id="GO:0046887">
    <property type="term" value="P:positive regulation of hormone secretion"/>
    <property type="evidence" value="ECO:0000314"/>
    <property type="project" value="RGD"/>
</dbReference>
<dbReference type="GO" id="GO:0002690">
    <property type="term" value="P:positive regulation of leukocyte chemotaxis"/>
    <property type="evidence" value="ECO:0000266"/>
    <property type="project" value="RGD"/>
</dbReference>
<dbReference type="GO" id="GO:0045987">
    <property type="term" value="P:positive regulation of smooth muscle contraction"/>
    <property type="evidence" value="ECO:0000314"/>
    <property type="project" value="RGD"/>
</dbReference>
<dbReference type="GO" id="GO:0001516">
    <property type="term" value="P:prostaglandin biosynthetic process"/>
    <property type="evidence" value="ECO:0000266"/>
    <property type="project" value="RGD"/>
</dbReference>
<dbReference type="GO" id="GO:0003100">
    <property type="term" value="P:regulation of systemic arterial blood pressure by endothelin"/>
    <property type="evidence" value="ECO:0000266"/>
    <property type="project" value="RGD"/>
</dbReference>
<dbReference type="GO" id="GO:0019229">
    <property type="term" value="P:regulation of vasoconstriction"/>
    <property type="evidence" value="ECO:0007669"/>
    <property type="project" value="InterPro"/>
</dbReference>
<dbReference type="GO" id="GO:0006939">
    <property type="term" value="P:smooth muscle contraction"/>
    <property type="evidence" value="ECO:0000266"/>
    <property type="project" value="RGD"/>
</dbReference>
<dbReference type="GO" id="GO:0001659">
    <property type="term" value="P:temperature homeostasis"/>
    <property type="evidence" value="ECO:0000266"/>
    <property type="project" value="RGD"/>
</dbReference>
<dbReference type="GO" id="GO:0001944">
    <property type="term" value="P:vasculature development"/>
    <property type="evidence" value="ECO:0000266"/>
    <property type="project" value="RGD"/>
</dbReference>
<dbReference type="GO" id="GO:0042310">
    <property type="term" value="P:vasoconstriction"/>
    <property type="evidence" value="ECO:0000266"/>
    <property type="project" value="RGD"/>
</dbReference>
<dbReference type="GO" id="GO:0014826">
    <property type="term" value="P:vein smooth muscle contraction"/>
    <property type="evidence" value="ECO:0000266"/>
    <property type="project" value="RGD"/>
</dbReference>
<dbReference type="InterPro" id="IPR020475">
    <property type="entry name" value="Endothelin"/>
</dbReference>
<dbReference type="InterPro" id="IPR019764">
    <property type="entry name" value="Endothelin_toxin_CS"/>
</dbReference>
<dbReference type="InterPro" id="IPR001928">
    <property type="entry name" value="Endothln-like_toxin"/>
</dbReference>
<dbReference type="PANTHER" id="PTHR13874">
    <property type="entry name" value="ENDOTHELIN"/>
    <property type="match status" value="1"/>
</dbReference>
<dbReference type="PANTHER" id="PTHR13874:SF9">
    <property type="entry name" value="ENDOTHELIN-2"/>
    <property type="match status" value="1"/>
</dbReference>
<dbReference type="Pfam" id="PF00322">
    <property type="entry name" value="Endothelin"/>
    <property type="match status" value="1"/>
</dbReference>
<dbReference type="PRINTS" id="PR00365">
    <property type="entry name" value="ENDOTHELIN"/>
</dbReference>
<dbReference type="SMART" id="SM00272">
    <property type="entry name" value="END"/>
    <property type="match status" value="2"/>
</dbReference>
<dbReference type="PROSITE" id="PS00270">
    <property type="entry name" value="ENDOTHELIN"/>
    <property type="match status" value="2"/>
</dbReference>
<comment type="function">
    <text>Vasoconstrictor.</text>
</comment>
<comment type="subcellular location">
    <subcellularLocation>
        <location>Secreted</location>
    </subcellularLocation>
</comment>
<comment type="similarity">
    <text evidence="3">Belongs to the endothelin/sarafotoxin family.</text>
</comment>
<reference key="1">
    <citation type="journal article" date="1997" name="Mamm. Genome">
        <title>Structure and organization of the rat endothelin-2 gene.</title>
        <authorList>
            <person name="Deng A.Y."/>
        </authorList>
    </citation>
    <scope>NUCLEOTIDE SEQUENCE [GENOMIC DNA]</scope>
</reference>
<reference key="2">
    <citation type="journal article" date="1991" name="Genomics">
        <title>cDNA cloning and chromosomal assignment of the endothelin 2 gene: vasoactive intestinal contractor peptide is rat endothelin 2.</title>
        <authorList>
            <person name="Bloch K.D."/>
            <person name="Hong C.C."/>
            <person name="Eddy R.L. Jr."/>
            <person name="Shows T.B."/>
            <person name="Quertermous T."/>
        </authorList>
    </citation>
    <scope>NUCLEOTIDE SEQUENCE [MRNA] OF 21-71</scope>
</reference>
<keyword id="KW-0165">Cleavage on pair of basic residues</keyword>
<keyword id="KW-1015">Disulfide bond</keyword>
<keyword id="KW-1185">Reference proteome</keyword>
<keyword id="KW-0964">Secreted</keyword>
<keyword id="KW-0732">Signal</keyword>
<keyword id="KW-0838">Vasoactive</keyword>
<keyword id="KW-0839">Vasoconstrictor</keyword>
<accession>P23943</accession>
<protein>
    <recommendedName>
        <fullName>Endothelin-2</fullName>
        <shortName>ET-2</shortName>
    </recommendedName>
    <alternativeName>
        <fullName>Preproendothelin-2</fullName>
        <shortName>PPET2</shortName>
    </alternativeName>
    <alternativeName>
        <fullName>Vasoactive intestinal contractor</fullName>
        <shortName>VIC</shortName>
    </alternativeName>
</protein>
<name>EDN2_RAT</name>
<proteinExistence type="evidence at transcript level"/>
<organism>
    <name type="scientific">Rattus norvegicus</name>
    <name type="common">Rat</name>
    <dbReference type="NCBI Taxonomy" id="10116"/>
    <lineage>
        <taxon>Eukaryota</taxon>
        <taxon>Metazoa</taxon>
        <taxon>Chordata</taxon>
        <taxon>Craniata</taxon>
        <taxon>Vertebrata</taxon>
        <taxon>Euteleostomi</taxon>
        <taxon>Mammalia</taxon>
        <taxon>Eutheria</taxon>
        <taxon>Euarchontoglires</taxon>
        <taxon>Glires</taxon>
        <taxon>Rodentia</taxon>
        <taxon>Myomorpha</taxon>
        <taxon>Muroidea</taxon>
        <taxon>Muridae</taxon>
        <taxon>Murinae</taxon>
        <taxon>Rattus</taxon>
    </lineage>
</organism>
<feature type="signal peptide" evidence="2">
    <location>
        <begin position="1"/>
        <end position="22"/>
    </location>
</feature>
<feature type="propeptide" id="PRO_0000008105">
    <location>
        <begin position="23"/>
        <end position="44"/>
    </location>
</feature>
<feature type="peptide" id="PRO_0000008106" description="Endothelin-2">
    <location>
        <begin position="47"/>
        <end position="67"/>
    </location>
</feature>
<feature type="propeptide" id="PRO_0000008107">
    <location>
        <begin position="68"/>
        <end position="176"/>
    </location>
</feature>
<feature type="region of interest" description="Endothelin-like">
    <location>
        <begin position="94"/>
        <end position="109"/>
    </location>
</feature>
<feature type="site" description="Cleavage; by KEL" evidence="1">
    <location>
        <begin position="67"/>
        <end position="68"/>
    </location>
</feature>
<feature type="disulfide bond" evidence="1">
    <location>
        <begin position="47"/>
        <end position="61"/>
    </location>
</feature>
<feature type="disulfide bond" evidence="1">
    <location>
        <begin position="49"/>
        <end position="57"/>
    </location>
</feature>
<gene>
    <name type="primary">Edn2</name>
</gene>
<sequence>MVSPAWCSIALALLLALHEGKGQAAATMEQPASAPKGRGPHLRFRRCSCNSWLDKECVYFCHLDIIWVNTAGQTAPYGLGNPPQRRRRSLPKRCECSSAGDSACATFCHRRPWPEAEVTSSSQGPAAVLETSKTWTAAGDLLQKLRDISAAKLQFVRLRPELTREAIPAHSRRRKR</sequence>